<gene>
    <name evidence="1" type="primary">pyrD</name>
    <name type="ordered locus">swp_2810</name>
</gene>
<sequence length="339" mass="36637">MFYKIAQKFMFQMDPELAHNFAIGSLKSTGNSPLNCFYAQKIKPAPVTMMGLTFPNPVGLAAGMDKDGECIDAFHAMGFGHVEVGTVTPRPQPGNEQPRLFRLKPAKAIINRMGFNNKGVDSLVENLKAVKSDAMVGVNIGKNKDTPVELGKDDYLICMDKVYQYAAYIAVNISSPNTPGLRSLQYGDLLDDLLGSLKQKQKDLTEKHGKYVPIALKIAPDLSSEEIEKIADSLIRNEFDAAIATNTTLTRDGVSGLLNANEAGGLSGKPLNSLSTIVIKQLADCLKGQIPIIGVGGINTAADALDKIDAGAQMVQIYSGFIYQGPQLIKDIIEAYRIK</sequence>
<feature type="chain" id="PRO_1000195091" description="Dihydroorotate dehydrogenase (quinone)">
    <location>
        <begin position="1"/>
        <end position="339"/>
    </location>
</feature>
<feature type="active site" description="Nucleophile" evidence="1">
    <location>
        <position position="175"/>
    </location>
</feature>
<feature type="binding site" evidence="1">
    <location>
        <begin position="62"/>
        <end position="66"/>
    </location>
    <ligand>
        <name>FMN</name>
        <dbReference type="ChEBI" id="CHEBI:58210"/>
    </ligand>
</feature>
<feature type="binding site" evidence="1">
    <location>
        <position position="66"/>
    </location>
    <ligand>
        <name>substrate</name>
    </ligand>
</feature>
<feature type="binding site" evidence="1">
    <location>
        <position position="86"/>
    </location>
    <ligand>
        <name>FMN</name>
        <dbReference type="ChEBI" id="CHEBI:58210"/>
    </ligand>
</feature>
<feature type="binding site" evidence="1">
    <location>
        <begin position="111"/>
        <end position="115"/>
    </location>
    <ligand>
        <name>substrate</name>
    </ligand>
</feature>
<feature type="binding site" evidence="1">
    <location>
        <position position="139"/>
    </location>
    <ligand>
        <name>FMN</name>
        <dbReference type="ChEBI" id="CHEBI:58210"/>
    </ligand>
</feature>
<feature type="binding site" evidence="1">
    <location>
        <position position="172"/>
    </location>
    <ligand>
        <name>FMN</name>
        <dbReference type="ChEBI" id="CHEBI:58210"/>
    </ligand>
</feature>
<feature type="binding site" evidence="1">
    <location>
        <position position="172"/>
    </location>
    <ligand>
        <name>substrate</name>
    </ligand>
</feature>
<feature type="binding site" evidence="1">
    <location>
        <position position="177"/>
    </location>
    <ligand>
        <name>substrate</name>
    </ligand>
</feature>
<feature type="binding site" evidence="1">
    <location>
        <position position="217"/>
    </location>
    <ligand>
        <name>FMN</name>
        <dbReference type="ChEBI" id="CHEBI:58210"/>
    </ligand>
</feature>
<feature type="binding site" evidence="1">
    <location>
        <position position="245"/>
    </location>
    <ligand>
        <name>FMN</name>
        <dbReference type="ChEBI" id="CHEBI:58210"/>
    </ligand>
</feature>
<feature type="binding site" evidence="1">
    <location>
        <begin position="246"/>
        <end position="247"/>
    </location>
    <ligand>
        <name>substrate</name>
    </ligand>
</feature>
<feature type="binding site" evidence="1">
    <location>
        <position position="268"/>
    </location>
    <ligand>
        <name>FMN</name>
        <dbReference type="ChEBI" id="CHEBI:58210"/>
    </ligand>
</feature>
<feature type="binding site" evidence="1">
    <location>
        <position position="297"/>
    </location>
    <ligand>
        <name>FMN</name>
        <dbReference type="ChEBI" id="CHEBI:58210"/>
    </ligand>
</feature>
<feature type="binding site" evidence="1">
    <location>
        <begin position="318"/>
        <end position="319"/>
    </location>
    <ligand>
        <name>FMN</name>
        <dbReference type="ChEBI" id="CHEBI:58210"/>
    </ligand>
</feature>
<protein>
    <recommendedName>
        <fullName evidence="1">Dihydroorotate dehydrogenase (quinone)</fullName>
        <ecNumber evidence="1">1.3.5.2</ecNumber>
    </recommendedName>
    <alternativeName>
        <fullName evidence="1">DHOdehase</fullName>
        <shortName evidence="1">DHOD</shortName>
        <shortName evidence="1">DHODase</shortName>
    </alternativeName>
    <alternativeName>
        <fullName evidence="1">Dihydroorotate oxidase</fullName>
    </alternativeName>
</protein>
<keyword id="KW-1003">Cell membrane</keyword>
<keyword id="KW-0285">Flavoprotein</keyword>
<keyword id="KW-0288">FMN</keyword>
<keyword id="KW-0472">Membrane</keyword>
<keyword id="KW-0560">Oxidoreductase</keyword>
<keyword id="KW-0665">Pyrimidine biosynthesis</keyword>
<comment type="function">
    <text evidence="1">Catalyzes the conversion of dihydroorotate to orotate with quinone as electron acceptor.</text>
</comment>
<comment type="catalytic activity">
    <reaction evidence="1">
        <text>(S)-dihydroorotate + a quinone = orotate + a quinol</text>
        <dbReference type="Rhea" id="RHEA:30187"/>
        <dbReference type="ChEBI" id="CHEBI:24646"/>
        <dbReference type="ChEBI" id="CHEBI:30839"/>
        <dbReference type="ChEBI" id="CHEBI:30864"/>
        <dbReference type="ChEBI" id="CHEBI:132124"/>
        <dbReference type="EC" id="1.3.5.2"/>
    </reaction>
</comment>
<comment type="cofactor">
    <cofactor evidence="1">
        <name>FMN</name>
        <dbReference type="ChEBI" id="CHEBI:58210"/>
    </cofactor>
    <text evidence="1">Binds 1 FMN per subunit.</text>
</comment>
<comment type="pathway">
    <text evidence="1">Pyrimidine metabolism; UMP biosynthesis via de novo pathway; orotate from (S)-dihydroorotate (quinone route): step 1/1.</text>
</comment>
<comment type="subunit">
    <text evidence="1">Monomer.</text>
</comment>
<comment type="subcellular location">
    <subcellularLocation>
        <location evidence="1">Cell membrane</location>
        <topology evidence="1">Peripheral membrane protein</topology>
    </subcellularLocation>
</comment>
<comment type="similarity">
    <text evidence="1">Belongs to the dihydroorotate dehydrogenase family. Type 2 subfamily.</text>
</comment>
<name>PYRD_SHEPW</name>
<organism>
    <name type="scientific">Shewanella piezotolerans (strain WP3 / JCM 13877)</name>
    <dbReference type="NCBI Taxonomy" id="225849"/>
    <lineage>
        <taxon>Bacteria</taxon>
        <taxon>Pseudomonadati</taxon>
        <taxon>Pseudomonadota</taxon>
        <taxon>Gammaproteobacteria</taxon>
        <taxon>Alteromonadales</taxon>
        <taxon>Shewanellaceae</taxon>
        <taxon>Shewanella</taxon>
    </lineage>
</organism>
<accession>B8CPG0</accession>
<dbReference type="EC" id="1.3.5.2" evidence="1"/>
<dbReference type="EMBL" id="CP000472">
    <property type="protein sequence ID" value="ACJ29536.1"/>
    <property type="molecule type" value="Genomic_DNA"/>
</dbReference>
<dbReference type="RefSeq" id="WP_020912890.1">
    <property type="nucleotide sequence ID" value="NC_011566.1"/>
</dbReference>
<dbReference type="SMR" id="B8CPG0"/>
<dbReference type="STRING" id="225849.swp_2810"/>
<dbReference type="KEGG" id="swp:swp_2810"/>
<dbReference type="eggNOG" id="COG0167">
    <property type="taxonomic scope" value="Bacteria"/>
</dbReference>
<dbReference type="HOGENOM" id="CLU_013640_2_0_6"/>
<dbReference type="OrthoDB" id="9802377at2"/>
<dbReference type="UniPathway" id="UPA00070">
    <property type="reaction ID" value="UER00946"/>
</dbReference>
<dbReference type="Proteomes" id="UP000000753">
    <property type="component" value="Chromosome"/>
</dbReference>
<dbReference type="GO" id="GO:0005737">
    <property type="term" value="C:cytoplasm"/>
    <property type="evidence" value="ECO:0007669"/>
    <property type="project" value="InterPro"/>
</dbReference>
<dbReference type="GO" id="GO:0005886">
    <property type="term" value="C:plasma membrane"/>
    <property type="evidence" value="ECO:0007669"/>
    <property type="project" value="UniProtKB-SubCell"/>
</dbReference>
<dbReference type="GO" id="GO:0106430">
    <property type="term" value="F:dihydroorotate dehydrogenase (quinone) activity"/>
    <property type="evidence" value="ECO:0007669"/>
    <property type="project" value="UniProtKB-EC"/>
</dbReference>
<dbReference type="GO" id="GO:0006207">
    <property type="term" value="P:'de novo' pyrimidine nucleobase biosynthetic process"/>
    <property type="evidence" value="ECO:0007669"/>
    <property type="project" value="InterPro"/>
</dbReference>
<dbReference type="GO" id="GO:0044205">
    <property type="term" value="P:'de novo' UMP biosynthetic process"/>
    <property type="evidence" value="ECO:0007669"/>
    <property type="project" value="UniProtKB-UniRule"/>
</dbReference>
<dbReference type="CDD" id="cd04738">
    <property type="entry name" value="DHOD_2_like"/>
    <property type="match status" value="1"/>
</dbReference>
<dbReference type="FunFam" id="3.20.20.70:FF:000028">
    <property type="entry name" value="Dihydroorotate dehydrogenase (quinone)"/>
    <property type="match status" value="1"/>
</dbReference>
<dbReference type="Gene3D" id="3.20.20.70">
    <property type="entry name" value="Aldolase class I"/>
    <property type="match status" value="1"/>
</dbReference>
<dbReference type="HAMAP" id="MF_00225">
    <property type="entry name" value="DHO_dh_type2"/>
    <property type="match status" value="1"/>
</dbReference>
<dbReference type="InterPro" id="IPR013785">
    <property type="entry name" value="Aldolase_TIM"/>
</dbReference>
<dbReference type="InterPro" id="IPR050074">
    <property type="entry name" value="DHO_dehydrogenase"/>
</dbReference>
<dbReference type="InterPro" id="IPR012135">
    <property type="entry name" value="Dihydroorotate_DH_1_2"/>
</dbReference>
<dbReference type="InterPro" id="IPR005719">
    <property type="entry name" value="Dihydroorotate_DH_2"/>
</dbReference>
<dbReference type="InterPro" id="IPR005720">
    <property type="entry name" value="Dihydroorotate_DH_cat"/>
</dbReference>
<dbReference type="InterPro" id="IPR001295">
    <property type="entry name" value="Dihydroorotate_DH_CS"/>
</dbReference>
<dbReference type="NCBIfam" id="NF003644">
    <property type="entry name" value="PRK05286.1-1"/>
    <property type="match status" value="1"/>
</dbReference>
<dbReference type="NCBIfam" id="NF003645">
    <property type="entry name" value="PRK05286.1-2"/>
    <property type="match status" value="1"/>
</dbReference>
<dbReference type="NCBIfam" id="NF003646">
    <property type="entry name" value="PRK05286.1-4"/>
    <property type="match status" value="1"/>
</dbReference>
<dbReference type="NCBIfam" id="NF003652">
    <property type="entry name" value="PRK05286.2-5"/>
    <property type="match status" value="1"/>
</dbReference>
<dbReference type="NCBIfam" id="TIGR01036">
    <property type="entry name" value="pyrD_sub2"/>
    <property type="match status" value="1"/>
</dbReference>
<dbReference type="PANTHER" id="PTHR48109:SF4">
    <property type="entry name" value="DIHYDROOROTATE DEHYDROGENASE (QUINONE), MITOCHONDRIAL"/>
    <property type="match status" value="1"/>
</dbReference>
<dbReference type="PANTHER" id="PTHR48109">
    <property type="entry name" value="DIHYDROOROTATE DEHYDROGENASE (QUINONE), MITOCHONDRIAL-RELATED"/>
    <property type="match status" value="1"/>
</dbReference>
<dbReference type="Pfam" id="PF01180">
    <property type="entry name" value="DHO_dh"/>
    <property type="match status" value="1"/>
</dbReference>
<dbReference type="PIRSF" id="PIRSF000164">
    <property type="entry name" value="DHO_oxidase"/>
    <property type="match status" value="1"/>
</dbReference>
<dbReference type="SUPFAM" id="SSF51395">
    <property type="entry name" value="FMN-linked oxidoreductases"/>
    <property type="match status" value="1"/>
</dbReference>
<dbReference type="PROSITE" id="PS00911">
    <property type="entry name" value="DHODEHASE_1"/>
    <property type="match status" value="1"/>
</dbReference>
<dbReference type="PROSITE" id="PS00912">
    <property type="entry name" value="DHODEHASE_2"/>
    <property type="match status" value="1"/>
</dbReference>
<proteinExistence type="inferred from homology"/>
<reference key="1">
    <citation type="journal article" date="2008" name="PLoS ONE">
        <title>Environmental adaptation: genomic analysis of the piezotolerant and psychrotolerant deep-sea iron reducing bacterium Shewanella piezotolerans WP3.</title>
        <authorList>
            <person name="Wang F."/>
            <person name="Wang J."/>
            <person name="Jian H."/>
            <person name="Zhang B."/>
            <person name="Li S."/>
            <person name="Wang F."/>
            <person name="Zeng X."/>
            <person name="Gao L."/>
            <person name="Bartlett D.H."/>
            <person name="Yu J."/>
            <person name="Hu S."/>
            <person name="Xiao X."/>
        </authorList>
    </citation>
    <scope>NUCLEOTIDE SEQUENCE [LARGE SCALE GENOMIC DNA]</scope>
    <source>
        <strain>WP3 / JCM 13877</strain>
    </source>
</reference>
<evidence type="ECO:0000255" key="1">
    <source>
        <dbReference type="HAMAP-Rule" id="MF_00225"/>
    </source>
</evidence>